<name>ASIP_TRAOB</name>
<accession>Q1XGU7</accession>
<accession>A1YL75</accession>
<gene>
    <name type="primary">ASIP</name>
</gene>
<organism>
    <name type="scientific">Trachypithecus obscurus</name>
    <name type="common">Dusky leaf-monkey</name>
    <name type="synonym">Presbytis obscura</name>
    <dbReference type="NCBI Taxonomy" id="54181"/>
    <lineage>
        <taxon>Eukaryota</taxon>
        <taxon>Metazoa</taxon>
        <taxon>Chordata</taxon>
        <taxon>Craniata</taxon>
        <taxon>Vertebrata</taxon>
        <taxon>Euteleostomi</taxon>
        <taxon>Mammalia</taxon>
        <taxon>Eutheria</taxon>
        <taxon>Euarchontoglires</taxon>
        <taxon>Primates</taxon>
        <taxon>Haplorrhini</taxon>
        <taxon>Catarrhini</taxon>
        <taxon>Cercopithecidae</taxon>
        <taxon>Colobinae</taxon>
        <taxon>Trachypithecus</taxon>
    </lineage>
</organism>
<dbReference type="EMBL" id="AB236879">
    <property type="protein sequence ID" value="BAE93027.1"/>
    <property type="molecule type" value="Genomic_DNA"/>
</dbReference>
<dbReference type="EMBL" id="EF094492">
    <property type="protein sequence ID" value="ABL84290.1"/>
    <property type="molecule type" value="Genomic_DNA"/>
</dbReference>
<dbReference type="GlyCosmos" id="Q1XGU7">
    <property type="glycosylation" value="1 site, No reported glycans"/>
</dbReference>
<dbReference type="GO" id="GO:0005615">
    <property type="term" value="C:extracellular space"/>
    <property type="evidence" value="ECO:0000250"/>
    <property type="project" value="UniProtKB"/>
</dbReference>
<dbReference type="GO" id="GO:0031779">
    <property type="term" value="F:melanocortin receptor binding"/>
    <property type="evidence" value="ECO:0007669"/>
    <property type="project" value="TreeGrafter"/>
</dbReference>
<dbReference type="GO" id="GO:0005184">
    <property type="term" value="F:neuropeptide hormone activity"/>
    <property type="evidence" value="ECO:0007669"/>
    <property type="project" value="TreeGrafter"/>
</dbReference>
<dbReference type="GO" id="GO:0009755">
    <property type="term" value="P:hormone-mediated signaling pathway"/>
    <property type="evidence" value="ECO:0007669"/>
    <property type="project" value="InterPro"/>
</dbReference>
<dbReference type="GO" id="GO:0042438">
    <property type="term" value="P:melanin biosynthetic process"/>
    <property type="evidence" value="ECO:0000250"/>
    <property type="project" value="UniProtKB"/>
</dbReference>
<dbReference type="GO" id="GO:0032438">
    <property type="term" value="P:melanosome organization"/>
    <property type="evidence" value="ECO:0007669"/>
    <property type="project" value="TreeGrafter"/>
</dbReference>
<dbReference type="FunFam" id="4.10.760.10:FF:000002">
    <property type="entry name" value="Agouti-signaling protein"/>
    <property type="match status" value="1"/>
</dbReference>
<dbReference type="Gene3D" id="4.10.760.10">
    <property type="entry name" value="Agouti domain"/>
    <property type="match status" value="1"/>
</dbReference>
<dbReference type="InterPro" id="IPR007733">
    <property type="entry name" value="Agouti"/>
</dbReference>
<dbReference type="InterPro" id="IPR027300">
    <property type="entry name" value="Agouti_dom"/>
</dbReference>
<dbReference type="InterPro" id="IPR036836">
    <property type="entry name" value="Agouti_dom_sf"/>
</dbReference>
<dbReference type="PANTHER" id="PTHR16551">
    <property type="entry name" value="AGOUTI RELATED"/>
    <property type="match status" value="1"/>
</dbReference>
<dbReference type="PANTHER" id="PTHR16551:SF1">
    <property type="entry name" value="AGOUTI-SIGNALING PROTEIN"/>
    <property type="match status" value="1"/>
</dbReference>
<dbReference type="Pfam" id="PF05039">
    <property type="entry name" value="Agouti"/>
    <property type="match status" value="1"/>
</dbReference>
<dbReference type="SMART" id="SM00792">
    <property type="entry name" value="Agouti"/>
    <property type="match status" value="1"/>
</dbReference>
<dbReference type="SUPFAM" id="SSF57055">
    <property type="entry name" value="Agouti-related protein"/>
    <property type="match status" value="1"/>
</dbReference>
<dbReference type="PROSITE" id="PS60024">
    <property type="entry name" value="AGOUTI_1"/>
    <property type="match status" value="1"/>
</dbReference>
<dbReference type="PROSITE" id="PS51150">
    <property type="entry name" value="AGOUTI_2"/>
    <property type="match status" value="1"/>
</dbReference>
<proteinExistence type="inferred from homology"/>
<protein>
    <recommendedName>
        <fullName>Agouti-signaling protein</fullName>
        <shortName>ASP</shortName>
    </recommendedName>
    <alternativeName>
        <fullName>Agouti switch protein</fullName>
    </alternativeName>
</protein>
<reference key="1">
    <citation type="journal article" date="2006" name="Genome Res.">
        <title>Alu-mediated 100-kb deletion in the primate genome: the loss of the agouti signaling protein gene in the lesser apes.</title>
        <authorList>
            <person name="Nakayama K."/>
            <person name="Ishida T."/>
        </authorList>
    </citation>
    <scope>NUCLEOTIDE SEQUENCE [GENOMIC DNA]</scope>
</reference>
<reference key="2">
    <citation type="journal article" date="2006" name="Mamm. Genome">
        <title>Investigation of the role of the agouti signaling protein gene (ASIP) in coat color evolution in primates.</title>
        <authorList>
            <person name="Mundy N.I."/>
            <person name="Kelly J."/>
        </authorList>
    </citation>
    <scope>NUCLEOTIDE SEQUENCE [GENOMIC DNA]</scope>
</reference>
<keyword id="KW-1015">Disulfide bond</keyword>
<keyword id="KW-0325">Glycoprotein</keyword>
<keyword id="KW-0960">Knottin</keyword>
<keyword id="KW-0964">Secreted</keyword>
<keyword id="KW-0732">Signal</keyword>
<comment type="function">
    <text evidence="3">Involved in the regulation of melanogenesis. The binding of ASP to MC1R precludes alpha-MSH initiated signaling and thus blocks production of cAMP, leading to a down-regulation of eumelanogenesis (brown/black pigment) and thus increasing synthesis of pheomelanin (yellow/red pigment) (By similarity).</text>
</comment>
<comment type="subcellular location">
    <subcellularLocation>
        <location evidence="2">Secreted</location>
    </subcellularLocation>
</comment>
<comment type="domain">
    <text evidence="1">The presence of a 'disulfide through disulfide knot' structurally defines this protein as a knottin.</text>
</comment>
<feature type="signal peptide" evidence="4">
    <location>
        <begin position="1"/>
        <end position="22"/>
    </location>
</feature>
<feature type="chain" id="PRO_0000235193" description="Agouti-signaling protein">
    <location>
        <begin position="23"/>
        <end position="132"/>
    </location>
</feature>
<feature type="domain" description="Agouti" evidence="5">
    <location>
        <begin position="93"/>
        <end position="132"/>
    </location>
</feature>
<feature type="region of interest" description="Disordered" evidence="6">
    <location>
        <begin position="62"/>
        <end position="93"/>
    </location>
</feature>
<feature type="compositionally biased region" description="Basic and acidic residues" evidence="6">
    <location>
        <begin position="63"/>
        <end position="79"/>
    </location>
</feature>
<feature type="glycosylation site" description="N-linked (GlcNAc...) asparagine" evidence="4">
    <location>
        <position position="39"/>
    </location>
</feature>
<feature type="disulfide bond" evidence="5">
    <location>
        <begin position="93"/>
        <end position="108"/>
    </location>
</feature>
<feature type="disulfide bond" evidence="5">
    <location>
        <begin position="100"/>
        <end position="114"/>
    </location>
</feature>
<feature type="disulfide bond" evidence="5">
    <location>
        <begin position="107"/>
        <end position="125"/>
    </location>
</feature>
<feature type="disulfide bond" evidence="5">
    <location>
        <begin position="111"/>
        <end position="132"/>
    </location>
</feature>
<feature type="disulfide bond" evidence="5">
    <location>
        <begin position="116"/>
        <end position="123"/>
    </location>
</feature>
<evidence type="ECO:0000250" key="1"/>
<evidence type="ECO:0000250" key="2">
    <source>
        <dbReference type="UniProtKB" id="P42127"/>
    </source>
</evidence>
<evidence type="ECO:0000250" key="3">
    <source>
        <dbReference type="UniProtKB" id="Q03288"/>
    </source>
</evidence>
<evidence type="ECO:0000255" key="4"/>
<evidence type="ECO:0000255" key="5">
    <source>
        <dbReference type="PROSITE-ProRule" id="PRU00494"/>
    </source>
</evidence>
<evidence type="ECO:0000256" key="6">
    <source>
        <dbReference type="SAM" id="MobiDB-lite"/>
    </source>
</evidence>
<sequence length="132" mass="14673">MDVTRLLLATLLVFLCFFTVYSHLPPEEKLRDDRSLRSNSSVNLLDFPSVSIVALNKKSKQISRKEAEKKRSSKKEASMKKVAQPRTPLSAPCVATRDSCKPPAPACCDPCASCQCRFFRSACSCRVLSLNC</sequence>